<comment type="function">
    <text evidence="1">Formation of pseudouridine at positions 38, 39 and 40 in the anticodon stem and loop of transfer RNAs.</text>
</comment>
<comment type="catalytic activity">
    <reaction evidence="1">
        <text>uridine(38/39/40) in tRNA = pseudouridine(38/39/40) in tRNA</text>
        <dbReference type="Rhea" id="RHEA:22376"/>
        <dbReference type="Rhea" id="RHEA-COMP:10085"/>
        <dbReference type="Rhea" id="RHEA-COMP:10087"/>
        <dbReference type="ChEBI" id="CHEBI:65314"/>
        <dbReference type="ChEBI" id="CHEBI:65315"/>
        <dbReference type="EC" id="5.4.99.12"/>
    </reaction>
</comment>
<comment type="subunit">
    <text evidence="1">Homodimer.</text>
</comment>
<comment type="similarity">
    <text evidence="1">Belongs to the tRNA pseudouridine synthase TruA family.</text>
</comment>
<accession>B7J0V1</accession>
<proteinExistence type="inferred from homology"/>
<organism>
    <name type="scientific">Borreliella burgdorferi (strain ZS7)</name>
    <name type="common">Borrelia burgdorferi</name>
    <dbReference type="NCBI Taxonomy" id="445985"/>
    <lineage>
        <taxon>Bacteria</taxon>
        <taxon>Pseudomonadati</taxon>
        <taxon>Spirochaetota</taxon>
        <taxon>Spirochaetia</taxon>
        <taxon>Spirochaetales</taxon>
        <taxon>Borreliaceae</taxon>
        <taxon>Borreliella</taxon>
    </lineage>
</organism>
<feature type="chain" id="PRO_1000194530" description="tRNA pseudouridine synthase A">
    <location>
        <begin position="1"/>
        <end position="246"/>
    </location>
</feature>
<feature type="active site" description="Nucleophile" evidence="1">
    <location>
        <position position="52"/>
    </location>
</feature>
<feature type="binding site" evidence="1">
    <location>
        <position position="111"/>
    </location>
    <ligand>
        <name>substrate</name>
    </ligand>
</feature>
<dbReference type="EC" id="5.4.99.12" evidence="1"/>
<dbReference type="EMBL" id="CP001205">
    <property type="protein sequence ID" value="ACK74751.1"/>
    <property type="molecule type" value="Genomic_DNA"/>
</dbReference>
<dbReference type="RefSeq" id="WP_002658373.1">
    <property type="nucleotide sequence ID" value="NC_011728.1"/>
</dbReference>
<dbReference type="SMR" id="B7J0V1"/>
<dbReference type="GeneID" id="56568203"/>
<dbReference type="KEGG" id="bbz:BbuZS7_0012"/>
<dbReference type="HOGENOM" id="CLU_014673_0_1_12"/>
<dbReference type="Proteomes" id="UP000006901">
    <property type="component" value="Chromosome"/>
</dbReference>
<dbReference type="GO" id="GO:0003723">
    <property type="term" value="F:RNA binding"/>
    <property type="evidence" value="ECO:0007669"/>
    <property type="project" value="InterPro"/>
</dbReference>
<dbReference type="GO" id="GO:0160147">
    <property type="term" value="F:tRNA pseudouridine(38-40) synthase activity"/>
    <property type="evidence" value="ECO:0007669"/>
    <property type="project" value="UniProtKB-EC"/>
</dbReference>
<dbReference type="GO" id="GO:0031119">
    <property type="term" value="P:tRNA pseudouridine synthesis"/>
    <property type="evidence" value="ECO:0007669"/>
    <property type="project" value="UniProtKB-UniRule"/>
</dbReference>
<dbReference type="CDD" id="cd02570">
    <property type="entry name" value="PseudoU_synth_EcTruA"/>
    <property type="match status" value="1"/>
</dbReference>
<dbReference type="FunFam" id="3.30.70.580:FF:000001">
    <property type="entry name" value="tRNA pseudouridine synthase A"/>
    <property type="match status" value="1"/>
</dbReference>
<dbReference type="Gene3D" id="3.30.70.660">
    <property type="entry name" value="Pseudouridine synthase I, catalytic domain, C-terminal subdomain"/>
    <property type="match status" value="1"/>
</dbReference>
<dbReference type="Gene3D" id="3.30.70.580">
    <property type="entry name" value="Pseudouridine synthase I, catalytic domain, N-terminal subdomain"/>
    <property type="match status" value="1"/>
</dbReference>
<dbReference type="HAMAP" id="MF_00171">
    <property type="entry name" value="TruA"/>
    <property type="match status" value="1"/>
</dbReference>
<dbReference type="InterPro" id="IPR020103">
    <property type="entry name" value="PsdUridine_synth_cat_dom_sf"/>
</dbReference>
<dbReference type="InterPro" id="IPR001406">
    <property type="entry name" value="PsdUridine_synth_TruA"/>
</dbReference>
<dbReference type="InterPro" id="IPR020097">
    <property type="entry name" value="PsdUridine_synth_TruA_a/b_dom"/>
</dbReference>
<dbReference type="InterPro" id="IPR020095">
    <property type="entry name" value="PsdUridine_synth_TruA_C"/>
</dbReference>
<dbReference type="InterPro" id="IPR020094">
    <property type="entry name" value="TruA/RsuA/RluB/E/F_N"/>
</dbReference>
<dbReference type="NCBIfam" id="TIGR00071">
    <property type="entry name" value="hisT_truA"/>
    <property type="match status" value="1"/>
</dbReference>
<dbReference type="PANTHER" id="PTHR11142">
    <property type="entry name" value="PSEUDOURIDYLATE SYNTHASE"/>
    <property type="match status" value="1"/>
</dbReference>
<dbReference type="PANTHER" id="PTHR11142:SF0">
    <property type="entry name" value="TRNA PSEUDOURIDINE SYNTHASE-LIKE 1"/>
    <property type="match status" value="1"/>
</dbReference>
<dbReference type="Pfam" id="PF01416">
    <property type="entry name" value="PseudoU_synth_1"/>
    <property type="match status" value="2"/>
</dbReference>
<dbReference type="PIRSF" id="PIRSF001430">
    <property type="entry name" value="tRNA_psdUrid_synth"/>
    <property type="match status" value="1"/>
</dbReference>
<dbReference type="SUPFAM" id="SSF55120">
    <property type="entry name" value="Pseudouridine synthase"/>
    <property type="match status" value="1"/>
</dbReference>
<evidence type="ECO:0000255" key="1">
    <source>
        <dbReference type="HAMAP-Rule" id="MF_00171"/>
    </source>
</evidence>
<name>TRUA_BORBZ</name>
<sequence>MKKILAEIAYDGSIYHGFQIQPTKPTVQGEIEKALMKINKKKVKIHSSGRTDKGVHAKRQIITFDIKINIQLNNLKKALNAILLKNSIKILKLRYVKNSFHPRFSAQKRKYSYCILNSDNYYPWEGYQAHYVNKKLSISNLNQMAKTLIGKHDFTTFSCIKDKSKSKFRHIYFAKFKKRGKYIIFEIIGSSFLWKMVRSIMGTMLDIEIKNESISTFETILKSKNRNLARTTAPANALFLERVYYE</sequence>
<protein>
    <recommendedName>
        <fullName evidence="1">tRNA pseudouridine synthase A</fullName>
        <ecNumber evidence="1">5.4.99.12</ecNumber>
    </recommendedName>
    <alternativeName>
        <fullName evidence="1">tRNA pseudouridine(38-40) synthase</fullName>
    </alternativeName>
    <alternativeName>
        <fullName evidence="1">tRNA pseudouridylate synthase I</fullName>
    </alternativeName>
    <alternativeName>
        <fullName evidence="1">tRNA-uridine isomerase I</fullName>
    </alternativeName>
</protein>
<reference key="1">
    <citation type="journal article" date="2011" name="J. Bacteriol.">
        <title>Whole-genome sequences of thirteen isolates of Borrelia burgdorferi.</title>
        <authorList>
            <person name="Schutzer S.E."/>
            <person name="Fraser-Liggett C.M."/>
            <person name="Casjens S.R."/>
            <person name="Qiu W.G."/>
            <person name="Dunn J.J."/>
            <person name="Mongodin E.F."/>
            <person name="Luft B.J."/>
        </authorList>
    </citation>
    <scope>NUCLEOTIDE SEQUENCE [LARGE SCALE GENOMIC DNA]</scope>
    <source>
        <strain>ZS7</strain>
    </source>
</reference>
<keyword id="KW-0413">Isomerase</keyword>
<keyword id="KW-0819">tRNA processing</keyword>
<gene>
    <name evidence="1" type="primary">truA</name>
    <name type="ordered locus">BbuZS7_0012</name>
</gene>